<protein>
    <recommendedName>
        <fullName evidence="7">Large ribosomal subunit protein bL33m</fullName>
    </recommendedName>
    <alternativeName>
        <fullName>39S ribosomal protein L33, mitochondrial</fullName>
        <shortName>L33mt</shortName>
        <shortName>MRP-L33</shortName>
    </alternativeName>
</protein>
<evidence type="ECO:0000250" key="1">
    <source>
        <dbReference type="UniProtKB" id="Q3SZ47"/>
    </source>
</evidence>
<evidence type="ECO:0000269" key="2">
    <source>
    </source>
</evidence>
<evidence type="ECO:0000269" key="3">
    <source>
    </source>
</evidence>
<evidence type="ECO:0000269" key="4">
    <source>
    </source>
</evidence>
<evidence type="ECO:0000269" key="5">
    <source>
    </source>
</evidence>
<evidence type="ECO:0000303" key="6">
    <source>
    </source>
</evidence>
<evidence type="ECO:0000303" key="7">
    <source>
    </source>
</evidence>
<evidence type="ECO:0000305" key="8"/>
<evidence type="ECO:0007744" key="9">
    <source>
        <dbReference type="PDB" id="3J7Y"/>
    </source>
</evidence>
<evidence type="ECO:0007744" key="10">
    <source>
        <dbReference type="PDB" id="3J9M"/>
    </source>
</evidence>
<evidence type="ECO:0007744" key="11">
    <source>
        <dbReference type="PDB" id="5OOL"/>
    </source>
</evidence>
<evidence type="ECO:0007744" key="12">
    <source>
        <dbReference type="PDB" id="5OOM"/>
    </source>
</evidence>
<evidence type="ECO:0007744" key="13">
    <source>
        <dbReference type="PDB" id="7QH6"/>
    </source>
</evidence>
<evidence type="ECO:0007744" key="14">
    <source>
        <dbReference type="PDB" id="7QH7"/>
    </source>
</evidence>
<evidence type="ECO:0007829" key="15">
    <source>
        <dbReference type="PDB" id="7OF0"/>
    </source>
</evidence>
<evidence type="ECO:0007829" key="16">
    <source>
        <dbReference type="PDB" id="7QH7"/>
    </source>
</evidence>
<organism>
    <name type="scientific">Homo sapiens</name>
    <name type="common">Human</name>
    <dbReference type="NCBI Taxonomy" id="9606"/>
    <lineage>
        <taxon>Eukaryota</taxon>
        <taxon>Metazoa</taxon>
        <taxon>Chordata</taxon>
        <taxon>Craniata</taxon>
        <taxon>Vertebrata</taxon>
        <taxon>Euteleostomi</taxon>
        <taxon>Mammalia</taxon>
        <taxon>Eutheria</taxon>
        <taxon>Euarchontoglires</taxon>
        <taxon>Primates</taxon>
        <taxon>Haplorrhini</taxon>
        <taxon>Catarrhini</taxon>
        <taxon>Hominidae</taxon>
        <taxon>Homo</taxon>
    </lineage>
</organism>
<accession>O75394</accession>
<accession>Q53RZ6</accession>
<accession>Q5FVE3</accession>
<accession>Q96Q50</accession>
<comment type="subunit">
    <text evidence="2 3 4 5">Component of the mitochondrial large ribosomal subunit (mt-LSU) (PubMed:25278503, PubMed:25838379, PubMed:28892042, PubMed:35177605). Mature mammalian 55S mitochondrial ribosomes consist of a small (28S) and a large (39S) subunit. The 28S small subunit contains a 12S ribosomal RNA (12S mt-rRNA) and 30 different proteins. The 39S large subunit contains a 16S rRNA (16S mt-rRNA), a copy of mitochondrial valine transfer RNA (mt-tRNA(Val)), which plays an integral structural role, and 52 different proteins.</text>
</comment>
<comment type="subcellular location">
    <subcellularLocation>
        <location evidence="2 3 4">Mitochondrion</location>
    </subcellularLocation>
</comment>
<comment type="alternative products">
    <event type="alternative splicing"/>
    <isoform>
        <id>O75394-1</id>
        <name>1</name>
        <sequence type="displayed"/>
    </isoform>
    <isoform>
        <id>O75394-2</id>
        <name>2</name>
        <sequence type="described" ref="VSP_042822"/>
    </isoform>
</comment>
<comment type="similarity">
    <text evidence="8">Belongs to the bacterial ribosomal protein bL33 family.</text>
</comment>
<sequence>MFLSAVFFAKSKSKNILVRMVSEAGTGFCFNTKRNRLREKLTLLHYDPVVKQRVLFVEKKKIRSL</sequence>
<reference key="1">
    <citation type="journal article" date="1998" name="Proc. Natl. Acad. Sci. U.S.A.">
        <title>Identification of genes expressed in human CD34(+) hematopoietic stem/progenitor cells by expressed sequence tags and efficient full-length cDNA cloning.</title>
        <authorList>
            <person name="Mao M."/>
            <person name="Fu G."/>
            <person name="Wu J.-S."/>
            <person name="Zhang Q.-H."/>
            <person name="Zhou J."/>
            <person name="Kan L.-X."/>
            <person name="Huang Q.-H."/>
            <person name="He K.-L."/>
            <person name="Gu B.-W."/>
            <person name="Han Z.-G."/>
            <person name="Shen Y."/>
            <person name="Gu J."/>
            <person name="Yu Y.-P."/>
            <person name="Xu S.-H."/>
            <person name="Wang Y.-X."/>
            <person name="Chen S.-J."/>
            <person name="Chen Z."/>
        </authorList>
    </citation>
    <scope>NUCLEOTIDE SEQUENCE [LARGE SCALE MRNA] (ISOFORM 1)</scope>
    <source>
        <tissue>Umbilical cord blood</tissue>
    </source>
</reference>
<reference key="2">
    <citation type="submission" date="2004-06" db="EMBL/GenBank/DDBJ databases">
        <title>Cloning of human full open reading frames in Gateway(TM) system entry vector (pDONR201).</title>
        <authorList>
            <person name="Ebert L."/>
            <person name="Schick M."/>
            <person name="Neubert P."/>
            <person name="Schatten R."/>
            <person name="Henze S."/>
            <person name="Korn B."/>
        </authorList>
    </citation>
    <scope>NUCLEOTIDE SEQUENCE [LARGE SCALE MRNA] (ISOFORM 1)</scope>
</reference>
<reference key="3">
    <citation type="submission" date="2004-06" db="EMBL/GenBank/DDBJ databases">
        <title>Cloning of human full open reading frames in Gateway(TM) system entry vector (pDONR201).</title>
        <authorList>
            <person name="Halleck A."/>
            <person name="Ebert L."/>
            <person name="Mkoundinya M."/>
            <person name="Schick M."/>
            <person name="Eisenstein S."/>
            <person name="Neubert P."/>
            <person name="Kstrang K."/>
            <person name="Schatten R."/>
            <person name="Shen B."/>
            <person name="Henze S."/>
            <person name="Mar W."/>
            <person name="Korn B."/>
            <person name="Zuo D."/>
            <person name="Hu Y."/>
            <person name="LaBaer J."/>
        </authorList>
    </citation>
    <scope>NUCLEOTIDE SEQUENCE [LARGE SCALE MRNA] (ISOFORM 1)</scope>
</reference>
<reference key="4">
    <citation type="journal article" date="2005" name="Nature">
        <title>Generation and annotation of the DNA sequences of human chromosomes 2 and 4.</title>
        <authorList>
            <person name="Hillier L.W."/>
            <person name="Graves T.A."/>
            <person name="Fulton R.S."/>
            <person name="Fulton L.A."/>
            <person name="Pepin K.H."/>
            <person name="Minx P."/>
            <person name="Wagner-McPherson C."/>
            <person name="Layman D."/>
            <person name="Wylie K."/>
            <person name="Sekhon M."/>
            <person name="Becker M.C."/>
            <person name="Fewell G.A."/>
            <person name="Delehaunty K.D."/>
            <person name="Miner T.L."/>
            <person name="Nash W.E."/>
            <person name="Kremitzki C."/>
            <person name="Oddy L."/>
            <person name="Du H."/>
            <person name="Sun H."/>
            <person name="Bradshaw-Cordum H."/>
            <person name="Ali J."/>
            <person name="Carter J."/>
            <person name="Cordes M."/>
            <person name="Harris A."/>
            <person name="Isak A."/>
            <person name="van Brunt A."/>
            <person name="Nguyen C."/>
            <person name="Du F."/>
            <person name="Courtney L."/>
            <person name="Kalicki J."/>
            <person name="Ozersky P."/>
            <person name="Abbott S."/>
            <person name="Armstrong J."/>
            <person name="Belter E.A."/>
            <person name="Caruso L."/>
            <person name="Cedroni M."/>
            <person name="Cotton M."/>
            <person name="Davidson T."/>
            <person name="Desai A."/>
            <person name="Elliott G."/>
            <person name="Erb T."/>
            <person name="Fronick C."/>
            <person name="Gaige T."/>
            <person name="Haakenson W."/>
            <person name="Haglund K."/>
            <person name="Holmes A."/>
            <person name="Harkins R."/>
            <person name="Kim K."/>
            <person name="Kruchowski S.S."/>
            <person name="Strong C.M."/>
            <person name="Grewal N."/>
            <person name="Goyea E."/>
            <person name="Hou S."/>
            <person name="Levy A."/>
            <person name="Martinka S."/>
            <person name="Mead K."/>
            <person name="McLellan M.D."/>
            <person name="Meyer R."/>
            <person name="Randall-Maher J."/>
            <person name="Tomlinson C."/>
            <person name="Dauphin-Kohlberg S."/>
            <person name="Kozlowicz-Reilly A."/>
            <person name="Shah N."/>
            <person name="Swearengen-Shahid S."/>
            <person name="Snider J."/>
            <person name="Strong J.T."/>
            <person name="Thompson J."/>
            <person name="Yoakum M."/>
            <person name="Leonard S."/>
            <person name="Pearman C."/>
            <person name="Trani L."/>
            <person name="Radionenko M."/>
            <person name="Waligorski J.E."/>
            <person name="Wang C."/>
            <person name="Rock S.M."/>
            <person name="Tin-Wollam A.-M."/>
            <person name="Maupin R."/>
            <person name="Latreille P."/>
            <person name="Wendl M.C."/>
            <person name="Yang S.-P."/>
            <person name="Pohl C."/>
            <person name="Wallis J.W."/>
            <person name="Spieth J."/>
            <person name="Bieri T.A."/>
            <person name="Berkowicz N."/>
            <person name="Nelson J.O."/>
            <person name="Osborne J."/>
            <person name="Ding L."/>
            <person name="Meyer R."/>
            <person name="Sabo A."/>
            <person name="Shotland Y."/>
            <person name="Sinha P."/>
            <person name="Wohldmann P.E."/>
            <person name="Cook L.L."/>
            <person name="Hickenbotham M.T."/>
            <person name="Eldred J."/>
            <person name="Williams D."/>
            <person name="Jones T.A."/>
            <person name="She X."/>
            <person name="Ciccarelli F.D."/>
            <person name="Izaurralde E."/>
            <person name="Taylor J."/>
            <person name="Schmutz J."/>
            <person name="Myers R.M."/>
            <person name="Cox D.R."/>
            <person name="Huang X."/>
            <person name="McPherson J.D."/>
            <person name="Mardis E.R."/>
            <person name="Clifton S.W."/>
            <person name="Warren W.C."/>
            <person name="Chinwalla A.T."/>
            <person name="Eddy S.R."/>
            <person name="Marra M.A."/>
            <person name="Ovcharenko I."/>
            <person name="Furey T.S."/>
            <person name="Miller W."/>
            <person name="Eichler E.E."/>
            <person name="Bork P."/>
            <person name="Suyama M."/>
            <person name="Torrents D."/>
            <person name="Waterston R.H."/>
            <person name="Wilson R.K."/>
        </authorList>
    </citation>
    <scope>NUCLEOTIDE SEQUENCE [LARGE SCALE GENOMIC DNA]</scope>
</reference>
<reference key="5">
    <citation type="submission" date="2005-09" db="EMBL/GenBank/DDBJ databases">
        <authorList>
            <person name="Mural R.J."/>
            <person name="Istrail S."/>
            <person name="Sutton G."/>
            <person name="Florea L."/>
            <person name="Halpern A.L."/>
            <person name="Mobarry C.M."/>
            <person name="Lippert R."/>
            <person name="Walenz B."/>
            <person name="Shatkay H."/>
            <person name="Dew I."/>
            <person name="Miller J.R."/>
            <person name="Flanigan M.J."/>
            <person name="Edwards N.J."/>
            <person name="Bolanos R."/>
            <person name="Fasulo D."/>
            <person name="Halldorsson B.V."/>
            <person name="Hannenhalli S."/>
            <person name="Turner R."/>
            <person name="Yooseph S."/>
            <person name="Lu F."/>
            <person name="Nusskern D.R."/>
            <person name="Shue B.C."/>
            <person name="Zheng X.H."/>
            <person name="Zhong F."/>
            <person name="Delcher A.L."/>
            <person name="Huson D.H."/>
            <person name="Kravitz S.A."/>
            <person name="Mouchard L."/>
            <person name="Reinert K."/>
            <person name="Remington K.A."/>
            <person name="Clark A.G."/>
            <person name="Waterman M.S."/>
            <person name="Eichler E.E."/>
            <person name="Adams M.D."/>
            <person name="Hunkapiller M.W."/>
            <person name="Myers E.W."/>
            <person name="Venter J.C."/>
        </authorList>
    </citation>
    <scope>NUCLEOTIDE SEQUENCE [LARGE SCALE GENOMIC DNA]</scope>
</reference>
<reference key="6">
    <citation type="journal article" date="2004" name="Genome Res.">
        <title>The status, quality, and expansion of the NIH full-length cDNA project: the Mammalian Gene Collection (MGC).</title>
        <authorList>
            <consortium name="The MGC Project Team"/>
        </authorList>
    </citation>
    <scope>NUCLEOTIDE SEQUENCE [LARGE SCALE MRNA] (ISOFORMS 1 AND 2)</scope>
    <source>
        <tissue>Brain</tissue>
        <tissue>Pituitary</tissue>
        <tissue>Testis</tissue>
    </source>
</reference>
<reference key="7">
    <citation type="journal article" date="2001" name="Genomics">
        <title>The human mitochondrial ribosomal protein genes: mapping of 54 genes to the chromosomes and implications for human disorders.</title>
        <authorList>
            <person name="Kenmochi N."/>
            <person name="Suzuki T."/>
            <person name="Uechi T."/>
            <person name="Magoori M."/>
            <person name="Kuniba M."/>
            <person name="Higa S."/>
            <person name="Watanabe K."/>
            <person name="Tanaka T."/>
        </authorList>
    </citation>
    <scope>NUCLEOTIDE SEQUENCE [GENOMIC DNA] OF 52-65</scope>
</reference>
<reference key="8">
    <citation type="journal article" date="2011" name="BMC Syst. Biol.">
        <title>Initial characterization of the human central proteome.</title>
        <authorList>
            <person name="Burkard T.R."/>
            <person name="Planyavsky M."/>
            <person name="Kaupe I."/>
            <person name="Breitwieser F.P."/>
            <person name="Buerckstuemmer T."/>
            <person name="Bennett K.L."/>
            <person name="Superti-Furga G."/>
            <person name="Colinge J."/>
        </authorList>
    </citation>
    <scope>IDENTIFICATION BY MASS SPECTROMETRY [LARGE SCALE ANALYSIS]</scope>
</reference>
<reference key="9">
    <citation type="journal article" date="2015" name="Proteomics">
        <title>N-terminome analysis of the human mitochondrial proteome.</title>
        <authorList>
            <person name="Vaca Jacome A.S."/>
            <person name="Rabilloud T."/>
            <person name="Schaeffer-Reiss C."/>
            <person name="Rompais M."/>
            <person name="Ayoub D."/>
            <person name="Lane L."/>
            <person name="Bairoch A."/>
            <person name="Van Dorsselaer A."/>
            <person name="Carapito C."/>
        </authorList>
    </citation>
    <scope>IDENTIFICATION BY MASS SPECTROMETRY [LARGE SCALE ANALYSIS]</scope>
</reference>
<reference evidence="9" key="10">
    <citation type="journal article" date="2014" name="Science">
        <title>Structure of the large ribosomal subunit from human mitochondria.</title>
        <authorList>
            <person name="Brown A."/>
            <person name="Amunts A."/>
            <person name="Bai X.C."/>
            <person name="Sugimoto Y."/>
            <person name="Edwards P.C."/>
            <person name="Murshudov G."/>
            <person name="Scheres S.H."/>
            <person name="Ramakrishnan V."/>
        </authorList>
    </citation>
    <scope>STRUCTURE BY ELECTRON MICROSCOPY (3.40 ANGSTROMS)</scope>
    <scope>SUBCELLULAR LOCATION</scope>
    <scope>SUBUNIT</scope>
</reference>
<reference evidence="10" key="11">
    <citation type="journal article" date="2015" name="Science">
        <title>Ribosome. The structure of the human mitochondrial ribosome.</title>
        <authorList>
            <person name="Amunts A."/>
            <person name="Brown A."/>
            <person name="Toots J."/>
            <person name="Scheres S.H."/>
            <person name="Ramakrishnan V."/>
        </authorList>
    </citation>
    <scope>STRUCTURE BY ELECTRON MICROSCOPY (3.50 ANGSTROMS)</scope>
    <scope>SUBCELLULAR LOCATION</scope>
    <scope>SUBUNIT</scope>
</reference>
<reference evidence="11 12" key="12">
    <citation type="journal article" date="2017" name="Nat. Struct. Mol. Biol.">
        <title>Structures of the human mitochondrial ribosome in native states of assembly.</title>
        <authorList>
            <person name="Brown A."/>
            <person name="Rathore S."/>
            <person name="Kimanius D."/>
            <person name="Aibara S."/>
            <person name="Bai X.C."/>
            <person name="Rorbach J."/>
            <person name="Amunts A."/>
            <person name="Ramakrishnan V."/>
        </authorList>
    </citation>
    <scope>STRUCTURE BY ELECTRON MICROSCOPY (3.03 ANGSTROMS)</scope>
    <scope>SUBCELLULAR LOCATION</scope>
    <scope>SUBUNIT</scope>
</reference>
<reference evidence="13 14" key="13">
    <citation type="journal article" date="2022" name="Nat. Commun.">
        <title>A late-stage assembly checkpoint of the human mitochondrial ribosome large subunit.</title>
        <authorList>
            <person name="Rebelo-Guiomar P."/>
            <person name="Pellegrino S."/>
            <person name="Dent K.C."/>
            <person name="Sas-Chen A."/>
            <person name="Miller-Fleming L."/>
            <person name="Garone C."/>
            <person name="Van Haute L."/>
            <person name="Rogan J.F."/>
            <person name="Dinan A."/>
            <person name="Firth A.E."/>
            <person name="Andrews B."/>
            <person name="Whitworth A.J."/>
            <person name="Schwartz S."/>
            <person name="Warren A.J."/>
            <person name="Minczuk M."/>
        </authorList>
    </citation>
    <scope>STRUCTURE BY ELECTRON MICROSCOPY (2.9 ANGSTROMS) IN COMPLEX WITH MTLSU</scope>
    <scope>SUBUNIT</scope>
</reference>
<gene>
    <name type="primary">MRPL33</name>
    <name type="synonym">C2orf1</name>
</gene>
<dbReference type="EMBL" id="AF047440">
    <property type="protein sequence ID" value="AAC39891.1"/>
    <property type="molecule type" value="mRNA"/>
</dbReference>
<dbReference type="EMBL" id="CR542117">
    <property type="protein sequence ID" value="CAG46914.1"/>
    <property type="molecule type" value="mRNA"/>
</dbReference>
<dbReference type="EMBL" id="CR456888">
    <property type="protein sequence ID" value="CAG33169.1"/>
    <property type="molecule type" value="mRNA"/>
</dbReference>
<dbReference type="EMBL" id="AC021171">
    <property type="status" value="NOT_ANNOTATED_CDS"/>
    <property type="molecule type" value="Genomic_DNA"/>
</dbReference>
<dbReference type="EMBL" id="AC074091">
    <property type="protein sequence ID" value="AAX93204.1"/>
    <property type="molecule type" value="Genomic_DNA"/>
</dbReference>
<dbReference type="EMBL" id="AC110084">
    <property type="status" value="NOT_ANNOTATED_CDS"/>
    <property type="molecule type" value="Genomic_DNA"/>
</dbReference>
<dbReference type="EMBL" id="CH471053">
    <property type="protein sequence ID" value="EAX00552.1"/>
    <property type="molecule type" value="Genomic_DNA"/>
</dbReference>
<dbReference type="EMBL" id="BC009475">
    <property type="protein sequence ID" value="AAH09475.1"/>
    <property type="molecule type" value="mRNA"/>
</dbReference>
<dbReference type="EMBL" id="BC020834">
    <property type="protein sequence ID" value="AAH20834.1"/>
    <property type="molecule type" value="mRNA"/>
</dbReference>
<dbReference type="EMBL" id="BC090047">
    <property type="protein sequence ID" value="AAH90047.1"/>
    <property type="molecule type" value="mRNA"/>
</dbReference>
<dbReference type="EMBL" id="AB051623">
    <property type="protein sequence ID" value="BAB54951.1"/>
    <property type="molecule type" value="Genomic_DNA"/>
</dbReference>
<dbReference type="CCDS" id="CCDS1761.1">
    <molecule id="O75394-1"/>
</dbReference>
<dbReference type="CCDS" id="CCDS33167.1">
    <molecule id="O75394-2"/>
</dbReference>
<dbReference type="RefSeq" id="NP_004882.1">
    <molecule id="O75394-1"/>
    <property type="nucleotide sequence ID" value="NM_004891.4"/>
</dbReference>
<dbReference type="RefSeq" id="NP_663303.1">
    <molecule id="O75394-2"/>
    <property type="nucleotide sequence ID" value="NM_145330.3"/>
</dbReference>
<dbReference type="PDB" id="3IY9">
    <property type="method" value="EM"/>
    <property type="resolution" value="14.10 A"/>
    <property type="chains" value="P=9-60"/>
</dbReference>
<dbReference type="PDB" id="3J7Y">
    <property type="method" value="EM"/>
    <property type="resolution" value="3.40 A"/>
    <property type="chains" value="1=1-65"/>
</dbReference>
<dbReference type="PDB" id="3J9M">
    <property type="method" value="EM"/>
    <property type="resolution" value="3.50 A"/>
    <property type="chains" value="1=1-65"/>
</dbReference>
<dbReference type="PDB" id="5OOL">
    <property type="method" value="EM"/>
    <property type="resolution" value="3.06 A"/>
    <property type="chains" value="1=1-65"/>
</dbReference>
<dbReference type="PDB" id="5OOM">
    <property type="method" value="EM"/>
    <property type="resolution" value="3.03 A"/>
    <property type="chains" value="1=1-65"/>
</dbReference>
<dbReference type="PDB" id="6I9R">
    <property type="method" value="EM"/>
    <property type="resolution" value="3.90 A"/>
    <property type="chains" value="1=1-65"/>
</dbReference>
<dbReference type="PDB" id="6NU2">
    <property type="method" value="EM"/>
    <property type="resolution" value="3.90 A"/>
    <property type="chains" value="1=14-65"/>
</dbReference>
<dbReference type="PDB" id="6NU3">
    <property type="method" value="EM"/>
    <property type="resolution" value="4.40 A"/>
    <property type="chains" value="1=1-65"/>
</dbReference>
<dbReference type="PDB" id="6VLZ">
    <property type="method" value="EM"/>
    <property type="resolution" value="2.97 A"/>
    <property type="chains" value="1=1-65"/>
</dbReference>
<dbReference type="PDB" id="6VMI">
    <property type="method" value="EM"/>
    <property type="resolution" value="2.96 A"/>
    <property type="chains" value="1=1-65"/>
</dbReference>
<dbReference type="PDB" id="6ZM5">
    <property type="method" value="EM"/>
    <property type="resolution" value="2.89 A"/>
    <property type="chains" value="1=1-65"/>
</dbReference>
<dbReference type="PDB" id="6ZM6">
    <property type="method" value="EM"/>
    <property type="resolution" value="2.59 A"/>
    <property type="chains" value="1=1-65"/>
</dbReference>
<dbReference type="PDB" id="6ZS9">
    <property type="method" value="EM"/>
    <property type="resolution" value="4.00 A"/>
    <property type="chains" value="1=1-65"/>
</dbReference>
<dbReference type="PDB" id="6ZSA">
    <property type="method" value="EM"/>
    <property type="resolution" value="4.00 A"/>
    <property type="chains" value="1=1-65"/>
</dbReference>
<dbReference type="PDB" id="6ZSB">
    <property type="method" value="EM"/>
    <property type="resolution" value="4.50 A"/>
    <property type="chains" value="1=1-65"/>
</dbReference>
<dbReference type="PDB" id="6ZSC">
    <property type="method" value="EM"/>
    <property type="resolution" value="3.50 A"/>
    <property type="chains" value="1=1-65"/>
</dbReference>
<dbReference type="PDB" id="6ZSD">
    <property type="method" value="EM"/>
    <property type="resolution" value="3.70 A"/>
    <property type="chains" value="1=1-65"/>
</dbReference>
<dbReference type="PDB" id="6ZSE">
    <property type="method" value="EM"/>
    <property type="resolution" value="5.00 A"/>
    <property type="chains" value="1=1-65"/>
</dbReference>
<dbReference type="PDB" id="6ZSG">
    <property type="method" value="EM"/>
    <property type="resolution" value="4.00 A"/>
    <property type="chains" value="1=1-65"/>
</dbReference>
<dbReference type="PDB" id="7A5F">
    <property type="method" value="EM"/>
    <property type="resolution" value="4.40 A"/>
    <property type="chains" value="13=1-65"/>
</dbReference>
<dbReference type="PDB" id="7A5G">
    <property type="method" value="EM"/>
    <property type="resolution" value="4.33 A"/>
    <property type="chains" value="13=1-65"/>
</dbReference>
<dbReference type="PDB" id="7A5H">
    <property type="method" value="EM"/>
    <property type="resolution" value="3.30 A"/>
    <property type="chains" value="1=1-65"/>
</dbReference>
<dbReference type="PDB" id="7A5I">
    <property type="method" value="EM"/>
    <property type="resolution" value="3.70 A"/>
    <property type="chains" value="13=1-65"/>
</dbReference>
<dbReference type="PDB" id="7A5J">
    <property type="method" value="EM"/>
    <property type="resolution" value="3.10 A"/>
    <property type="chains" value="1=1-65"/>
</dbReference>
<dbReference type="PDB" id="7A5K">
    <property type="method" value="EM"/>
    <property type="resolution" value="3.70 A"/>
    <property type="chains" value="13=1-65"/>
</dbReference>
<dbReference type="PDB" id="7L08">
    <property type="method" value="EM"/>
    <property type="resolution" value="3.49 A"/>
    <property type="chains" value="1=1-65"/>
</dbReference>
<dbReference type="PDB" id="7L20">
    <property type="method" value="EM"/>
    <property type="resolution" value="3.15 A"/>
    <property type="chains" value="1=1-65"/>
</dbReference>
<dbReference type="PDB" id="7O9K">
    <property type="method" value="EM"/>
    <property type="resolution" value="3.10 A"/>
    <property type="chains" value="1=1-65"/>
</dbReference>
<dbReference type="PDB" id="7O9M">
    <property type="method" value="EM"/>
    <property type="resolution" value="2.50 A"/>
    <property type="chains" value="1=1-65"/>
</dbReference>
<dbReference type="PDB" id="7ODR">
    <property type="method" value="EM"/>
    <property type="resolution" value="2.90 A"/>
    <property type="chains" value="1=1-65"/>
</dbReference>
<dbReference type="PDB" id="7ODS">
    <property type="method" value="EM"/>
    <property type="resolution" value="3.10 A"/>
    <property type="chains" value="1=1-65"/>
</dbReference>
<dbReference type="PDB" id="7ODT">
    <property type="method" value="EM"/>
    <property type="resolution" value="3.10 A"/>
    <property type="chains" value="1=1-65"/>
</dbReference>
<dbReference type="PDB" id="7OF0">
    <property type="method" value="EM"/>
    <property type="resolution" value="2.20 A"/>
    <property type="chains" value="1=1-65"/>
</dbReference>
<dbReference type="PDB" id="7OF2">
    <property type="method" value="EM"/>
    <property type="resolution" value="2.70 A"/>
    <property type="chains" value="1=1-65"/>
</dbReference>
<dbReference type="PDB" id="7OF3">
    <property type="method" value="EM"/>
    <property type="resolution" value="2.70 A"/>
    <property type="chains" value="1=1-65"/>
</dbReference>
<dbReference type="PDB" id="7OF4">
    <property type="method" value="EM"/>
    <property type="resolution" value="2.70 A"/>
    <property type="chains" value="1=1-65"/>
</dbReference>
<dbReference type="PDB" id="7OF5">
    <property type="method" value="EM"/>
    <property type="resolution" value="2.90 A"/>
    <property type="chains" value="1=1-65"/>
</dbReference>
<dbReference type="PDB" id="7OF6">
    <property type="method" value="EM"/>
    <property type="resolution" value="2.60 A"/>
    <property type="chains" value="1=1-65"/>
</dbReference>
<dbReference type="PDB" id="7OF7">
    <property type="method" value="EM"/>
    <property type="resolution" value="2.50 A"/>
    <property type="chains" value="1=1-65"/>
</dbReference>
<dbReference type="PDB" id="7OG4">
    <property type="method" value="EM"/>
    <property type="resolution" value="3.80 A"/>
    <property type="chains" value="1=1-65"/>
</dbReference>
<dbReference type="PDB" id="7OI7">
    <property type="method" value="EM"/>
    <property type="resolution" value="3.50 A"/>
    <property type="chains" value="1=1-65"/>
</dbReference>
<dbReference type="PDB" id="7OI8">
    <property type="method" value="EM"/>
    <property type="resolution" value="3.50 A"/>
    <property type="chains" value="1=1-65"/>
</dbReference>
<dbReference type="PDB" id="7OI9">
    <property type="method" value="EM"/>
    <property type="resolution" value="3.30 A"/>
    <property type="chains" value="1=1-65"/>
</dbReference>
<dbReference type="PDB" id="7OIA">
    <property type="method" value="EM"/>
    <property type="resolution" value="3.20 A"/>
    <property type="chains" value="1=1-65"/>
</dbReference>
<dbReference type="PDB" id="7OIB">
    <property type="method" value="EM"/>
    <property type="resolution" value="3.30 A"/>
    <property type="chains" value="1=1-65"/>
</dbReference>
<dbReference type="PDB" id="7OIC">
    <property type="method" value="EM"/>
    <property type="resolution" value="3.10 A"/>
    <property type="chains" value="1=1-65"/>
</dbReference>
<dbReference type="PDB" id="7OID">
    <property type="method" value="EM"/>
    <property type="resolution" value="3.70 A"/>
    <property type="chains" value="1=1-65"/>
</dbReference>
<dbReference type="PDB" id="7OIE">
    <property type="method" value="EM"/>
    <property type="resolution" value="3.50 A"/>
    <property type="chains" value="1=1-65"/>
</dbReference>
<dbReference type="PDB" id="7PD3">
    <property type="method" value="EM"/>
    <property type="resolution" value="3.40 A"/>
    <property type="chains" value="1=1-65"/>
</dbReference>
<dbReference type="PDB" id="7PO4">
    <property type="method" value="EM"/>
    <property type="resolution" value="2.56 A"/>
    <property type="chains" value="1=1-65"/>
</dbReference>
<dbReference type="PDB" id="7QH6">
    <property type="method" value="EM"/>
    <property type="resolution" value="3.08 A"/>
    <property type="chains" value="1=1-65"/>
</dbReference>
<dbReference type="PDB" id="7QH7">
    <property type="method" value="EM"/>
    <property type="resolution" value="2.89 A"/>
    <property type="chains" value="1=14-62"/>
</dbReference>
<dbReference type="PDB" id="7QI4">
    <property type="method" value="EM"/>
    <property type="resolution" value="2.21 A"/>
    <property type="chains" value="1=1-65"/>
</dbReference>
<dbReference type="PDB" id="7QI5">
    <property type="method" value="EM"/>
    <property type="resolution" value="2.63 A"/>
    <property type="chains" value="1=1-65"/>
</dbReference>
<dbReference type="PDB" id="7QI6">
    <property type="method" value="EM"/>
    <property type="resolution" value="2.98 A"/>
    <property type="chains" value="1=1-65"/>
</dbReference>
<dbReference type="PDB" id="8ANY">
    <property type="method" value="EM"/>
    <property type="resolution" value="2.85 A"/>
    <property type="chains" value="1=1-65"/>
</dbReference>
<dbReference type="PDB" id="8K2A">
    <property type="method" value="EM"/>
    <property type="resolution" value="2.90 A"/>
    <property type="chains" value="Lg=1-65"/>
</dbReference>
<dbReference type="PDB" id="8K2B">
    <property type="method" value="EM"/>
    <property type="resolution" value="3.40 A"/>
    <property type="chains" value="Lg=1-65"/>
</dbReference>
<dbReference type="PDB" id="8OIR">
    <property type="method" value="EM"/>
    <property type="resolution" value="3.10 A"/>
    <property type="chains" value="BI=1-65"/>
</dbReference>
<dbReference type="PDB" id="8OIT">
    <property type="method" value="EM"/>
    <property type="resolution" value="2.90 A"/>
    <property type="chains" value="BI=1-65"/>
</dbReference>
<dbReference type="PDB" id="8PK0">
    <property type="method" value="EM"/>
    <property type="resolution" value="3.03 A"/>
    <property type="chains" value="1=1-65"/>
</dbReference>
<dbReference type="PDB" id="8QSJ">
    <property type="method" value="EM"/>
    <property type="resolution" value="3.00 A"/>
    <property type="chains" value="1=1-65"/>
</dbReference>
<dbReference type="PDB" id="8QU1">
    <property type="method" value="EM"/>
    <property type="resolution" value="2.74 A"/>
    <property type="chains" value="1=1-65"/>
</dbReference>
<dbReference type="PDB" id="8QU5">
    <property type="method" value="EM"/>
    <property type="resolution" value="2.42 A"/>
    <property type="chains" value="1=1-65"/>
</dbReference>
<dbReference type="PDB" id="8RRI">
    <property type="method" value="EM"/>
    <property type="resolution" value="2.40 A"/>
    <property type="chains" value="1=1-65"/>
</dbReference>
<dbReference type="PDB" id="8XT0">
    <property type="method" value="EM"/>
    <property type="resolution" value="3.20 A"/>
    <property type="chains" value="Lg=1-65"/>
</dbReference>
<dbReference type="PDB" id="8XT1">
    <property type="method" value="EM"/>
    <property type="resolution" value="3.10 A"/>
    <property type="chains" value="Lg=1-65"/>
</dbReference>
<dbReference type="PDB" id="8XT2">
    <property type="method" value="EM"/>
    <property type="resolution" value="3.30 A"/>
    <property type="chains" value="Lg=1-65"/>
</dbReference>
<dbReference type="PDB" id="8XT3">
    <property type="method" value="EM"/>
    <property type="resolution" value="3.10 A"/>
    <property type="chains" value="Lg=1-65"/>
</dbReference>
<dbReference type="PDBsum" id="3IY9"/>
<dbReference type="PDBsum" id="3J7Y"/>
<dbReference type="PDBsum" id="3J9M"/>
<dbReference type="PDBsum" id="5OOL"/>
<dbReference type="PDBsum" id="5OOM"/>
<dbReference type="PDBsum" id="6I9R"/>
<dbReference type="PDBsum" id="6NU2"/>
<dbReference type="PDBsum" id="6NU3"/>
<dbReference type="PDBsum" id="6VLZ"/>
<dbReference type="PDBsum" id="6VMI"/>
<dbReference type="PDBsum" id="6ZM5"/>
<dbReference type="PDBsum" id="6ZM6"/>
<dbReference type="PDBsum" id="6ZS9"/>
<dbReference type="PDBsum" id="6ZSA"/>
<dbReference type="PDBsum" id="6ZSB"/>
<dbReference type="PDBsum" id="6ZSC"/>
<dbReference type="PDBsum" id="6ZSD"/>
<dbReference type="PDBsum" id="6ZSE"/>
<dbReference type="PDBsum" id="6ZSG"/>
<dbReference type="PDBsum" id="7A5F"/>
<dbReference type="PDBsum" id="7A5G"/>
<dbReference type="PDBsum" id="7A5H"/>
<dbReference type="PDBsum" id="7A5I"/>
<dbReference type="PDBsum" id="7A5J"/>
<dbReference type="PDBsum" id="7A5K"/>
<dbReference type="PDBsum" id="7L08"/>
<dbReference type="PDBsum" id="7L20"/>
<dbReference type="PDBsum" id="7O9K"/>
<dbReference type="PDBsum" id="7O9M"/>
<dbReference type="PDBsum" id="7ODR"/>
<dbReference type="PDBsum" id="7ODS"/>
<dbReference type="PDBsum" id="7ODT"/>
<dbReference type="PDBsum" id="7OF0"/>
<dbReference type="PDBsum" id="7OF2"/>
<dbReference type="PDBsum" id="7OF3"/>
<dbReference type="PDBsum" id="7OF4"/>
<dbReference type="PDBsum" id="7OF5"/>
<dbReference type="PDBsum" id="7OF6"/>
<dbReference type="PDBsum" id="7OF7"/>
<dbReference type="PDBsum" id="7OG4"/>
<dbReference type="PDBsum" id="7OI7"/>
<dbReference type="PDBsum" id="7OI8"/>
<dbReference type="PDBsum" id="7OI9"/>
<dbReference type="PDBsum" id="7OIA"/>
<dbReference type="PDBsum" id="7OIB"/>
<dbReference type="PDBsum" id="7OIC"/>
<dbReference type="PDBsum" id="7OID"/>
<dbReference type="PDBsum" id="7OIE"/>
<dbReference type="PDBsum" id="7PD3"/>
<dbReference type="PDBsum" id="7PO4"/>
<dbReference type="PDBsum" id="7QH6"/>
<dbReference type="PDBsum" id="7QH7"/>
<dbReference type="PDBsum" id="7QI4"/>
<dbReference type="PDBsum" id="7QI5"/>
<dbReference type="PDBsum" id="7QI6"/>
<dbReference type="PDBsum" id="8ANY"/>
<dbReference type="PDBsum" id="8K2A"/>
<dbReference type="PDBsum" id="8K2B"/>
<dbReference type="PDBsum" id="8OIR"/>
<dbReference type="PDBsum" id="8OIT"/>
<dbReference type="PDBsum" id="8PK0"/>
<dbReference type="PDBsum" id="8QSJ"/>
<dbReference type="PDBsum" id="8QU1"/>
<dbReference type="PDBsum" id="8QU5"/>
<dbReference type="PDBsum" id="8RRI"/>
<dbReference type="PDBsum" id="8XT0"/>
<dbReference type="PDBsum" id="8XT1"/>
<dbReference type="PDBsum" id="8XT2"/>
<dbReference type="PDBsum" id="8XT3"/>
<dbReference type="EMDB" id="EMD-0514"/>
<dbReference type="EMDB" id="EMD-0515"/>
<dbReference type="EMDB" id="EMD-11278"/>
<dbReference type="EMDB" id="EMD-11279"/>
<dbReference type="EMDB" id="EMD-11390"/>
<dbReference type="EMDB" id="EMD-11391"/>
<dbReference type="EMDB" id="EMD-11392"/>
<dbReference type="EMDB" id="EMD-11393"/>
<dbReference type="EMDB" id="EMD-11394"/>
<dbReference type="EMDB" id="EMD-11395"/>
<dbReference type="EMDB" id="EMD-11397"/>
<dbReference type="EMDB" id="EMD-11641"/>
<dbReference type="EMDB" id="EMD-11642"/>
<dbReference type="EMDB" id="EMD-11643"/>
<dbReference type="EMDB" id="EMD-11644"/>
<dbReference type="EMDB" id="EMD-11645"/>
<dbReference type="EMDB" id="EMD-11646"/>
<dbReference type="EMDB" id="EMD-12763"/>
<dbReference type="EMDB" id="EMD-12764"/>
<dbReference type="EMDB" id="EMD-12845"/>
<dbReference type="EMDB" id="EMD-12846"/>
<dbReference type="EMDB" id="EMD-12847"/>
<dbReference type="EMDB" id="EMD-12865"/>
<dbReference type="EMDB" id="EMD-12867"/>
<dbReference type="EMDB" id="EMD-12868"/>
<dbReference type="EMDB" id="EMD-12869"/>
<dbReference type="EMDB" id="EMD-12870"/>
<dbReference type="EMDB" id="EMD-12871"/>
<dbReference type="EMDB" id="EMD-12872"/>
<dbReference type="EMDB" id="EMD-12877"/>
<dbReference type="EMDB" id="EMD-12920"/>
<dbReference type="EMDB" id="EMD-12921"/>
<dbReference type="EMDB" id="EMD-12922"/>
<dbReference type="EMDB" id="EMD-12923"/>
<dbReference type="EMDB" id="EMD-12924"/>
<dbReference type="EMDB" id="EMD-12925"/>
<dbReference type="EMDB" id="EMD-12926"/>
<dbReference type="EMDB" id="EMD-12927"/>
<dbReference type="EMDB" id="EMD-13329"/>
<dbReference type="EMDB" id="EMD-13562"/>
<dbReference type="EMDB" id="EMD-13965"/>
<dbReference type="EMDB" id="EMD-13967"/>
<dbReference type="EMDB" id="EMD-13980"/>
<dbReference type="EMDB" id="EMD-13981"/>
<dbReference type="EMDB" id="EMD-13982"/>
<dbReference type="EMDB" id="EMD-15544"/>
<dbReference type="EMDB" id="EMD-16897"/>
<dbReference type="EMDB" id="EMD-16899"/>
<dbReference type="EMDB" id="EMD-17719"/>
<dbReference type="EMDB" id="EMD-19460"/>
<dbReference type="EMDB" id="EMD-21233"/>
<dbReference type="EMDB" id="EMD-21242"/>
<dbReference type="EMDB" id="EMD-23096"/>
<dbReference type="EMDB" id="EMD-23121"/>
<dbReference type="EMDB" id="EMD-36836"/>
<dbReference type="EMDB" id="EMD-36837"/>
<dbReference type="EMDB" id="EMD-3842"/>
<dbReference type="EMDB" id="EMD-3843"/>
<dbReference type="EMDB" id="EMD-38632"/>
<dbReference type="EMDB" id="EMD-38633"/>
<dbReference type="EMDB" id="EMD-38634"/>
<dbReference type="EMDB" id="EMD-38635"/>
<dbReference type="EMDB" id="EMD-4434"/>
<dbReference type="SMR" id="O75394"/>
<dbReference type="BioGRID" id="114925">
    <property type="interactions" value="59"/>
</dbReference>
<dbReference type="ComplexPortal" id="CPX-5226">
    <property type="entry name" value="39S mitochondrial large ribosomal subunit"/>
</dbReference>
<dbReference type="CORUM" id="O75394"/>
<dbReference type="FunCoup" id="O75394">
    <property type="interactions" value="814"/>
</dbReference>
<dbReference type="IntAct" id="O75394">
    <property type="interactions" value="44"/>
</dbReference>
<dbReference type="MINT" id="O75394"/>
<dbReference type="STRING" id="9606.ENSP00000296102"/>
<dbReference type="GlyGen" id="O75394">
    <property type="glycosylation" value="1 site, 1 O-linked glycan (1 site)"/>
</dbReference>
<dbReference type="iPTMnet" id="O75394"/>
<dbReference type="PhosphoSitePlus" id="O75394"/>
<dbReference type="BioMuta" id="MRPL33"/>
<dbReference type="jPOST" id="O75394"/>
<dbReference type="MassIVE" id="O75394"/>
<dbReference type="PaxDb" id="9606-ENSP00000296102"/>
<dbReference type="PeptideAtlas" id="O75394"/>
<dbReference type="ProteomicsDB" id="49965">
    <molecule id="O75394-1"/>
</dbReference>
<dbReference type="ProteomicsDB" id="49966">
    <molecule id="O75394-2"/>
</dbReference>
<dbReference type="Pumba" id="O75394"/>
<dbReference type="TopDownProteomics" id="O75394-1">
    <molecule id="O75394-1"/>
</dbReference>
<dbReference type="Antibodypedia" id="58354">
    <property type="antibodies" value="109 antibodies from 23 providers"/>
</dbReference>
<dbReference type="DNASU" id="9553"/>
<dbReference type="Ensembl" id="ENST00000296102.8">
    <molecule id="O75394-1"/>
    <property type="protein sequence ID" value="ENSP00000296102.3"/>
    <property type="gene ID" value="ENSG00000243147.8"/>
</dbReference>
<dbReference type="Ensembl" id="ENST00000379666.7">
    <molecule id="O75394-2"/>
    <property type="protein sequence ID" value="ENSP00000368988.3"/>
    <property type="gene ID" value="ENSG00000243147.8"/>
</dbReference>
<dbReference type="GeneID" id="9553"/>
<dbReference type="KEGG" id="hsa:9553"/>
<dbReference type="MANE-Select" id="ENST00000296102.8">
    <property type="protein sequence ID" value="ENSP00000296102.3"/>
    <property type="RefSeq nucleotide sequence ID" value="NM_004891.4"/>
    <property type="RefSeq protein sequence ID" value="NP_004882.1"/>
</dbReference>
<dbReference type="UCSC" id="uc002rlm.1">
    <molecule id="O75394-1"/>
    <property type="organism name" value="human"/>
</dbReference>
<dbReference type="AGR" id="HGNC:14487"/>
<dbReference type="CTD" id="9553"/>
<dbReference type="DisGeNET" id="9553"/>
<dbReference type="GeneCards" id="MRPL33"/>
<dbReference type="HGNC" id="HGNC:14487">
    <property type="gene designation" value="MRPL33"/>
</dbReference>
<dbReference type="HPA" id="ENSG00000243147">
    <property type="expression patterns" value="Low tissue specificity"/>
</dbReference>
<dbReference type="MIM" id="610059">
    <property type="type" value="gene"/>
</dbReference>
<dbReference type="neXtProt" id="NX_O75394"/>
<dbReference type="OpenTargets" id="ENSG00000243147"/>
<dbReference type="PharmGKB" id="PA30964"/>
<dbReference type="VEuPathDB" id="HostDB:ENSG00000243147"/>
<dbReference type="eggNOG" id="KOG3505">
    <property type="taxonomic scope" value="Eukaryota"/>
</dbReference>
<dbReference type="GeneTree" id="ENSGT00390000010130"/>
<dbReference type="HOGENOM" id="CLU_3124455_0_0_1"/>
<dbReference type="InParanoid" id="O75394"/>
<dbReference type="OMA" id="TCFNVKR"/>
<dbReference type="PAN-GO" id="O75394">
    <property type="GO annotations" value="1 GO annotation based on evolutionary models"/>
</dbReference>
<dbReference type="PhylomeDB" id="O75394"/>
<dbReference type="TreeFam" id="TF300279"/>
<dbReference type="PathwayCommons" id="O75394"/>
<dbReference type="Reactome" id="R-HSA-5368286">
    <property type="pathway name" value="Mitochondrial translation initiation"/>
</dbReference>
<dbReference type="Reactome" id="R-HSA-5389840">
    <property type="pathway name" value="Mitochondrial translation elongation"/>
</dbReference>
<dbReference type="Reactome" id="R-HSA-5419276">
    <property type="pathway name" value="Mitochondrial translation termination"/>
</dbReference>
<dbReference type="SignaLink" id="O75394"/>
<dbReference type="SIGNOR" id="O75394"/>
<dbReference type="BioGRID-ORCS" id="9553">
    <property type="hits" value="464 hits in 1180 CRISPR screens"/>
</dbReference>
<dbReference type="ChiTaRS" id="MRPL33">
    <property type="organism name" value="human"/>
</dbReference>
<dbReference type="EvolutionaryTrace" id="O75394"/>
<dbReference type="GeneWiki" id="MRPL33"/>
<dbReference type="GenomeRNAi" id="9553"/>
<dbReference type="Pharos" id="O75394">
    <property type="development level" value="Tdark"/>
</dbReference>
<dbReference type="PRO" id="PR:O75394"/>
<dbReference type="Proteomes" id="UP000005640">
    <property type="component" value="Chromosome 2"/>
</dbReference>
<dbReference type="RNAct" id="O75394">
    <property type="molecule type" value="protein"/>
</dbReference>
<dbReference type="Bgee" id="ENSG00000243147">
    <property type="expression patterns" value="Expressed in right adrenal gland cortex and 209 other cell types or tissues"/>
</dbReference>
<dbReference type="ExpressionAtlas" id="O75394">
    <property type="expression patterns" value="baseline and differential"/>
</dbReference>
<dbReference type="GO" id="GO:0005743">
    <property type="term" value="C:mitochondrial inner membrane"/>
    <property type="evidence" value="ECO:0000304"/>
    <property type="project" value="Reactome"/>
</dbReference>
<dbReference type="GO" id="GO:0005762">
    <property type="term" value="C:mitochondrial large ribosomal subunit"/>
    <property type="evidence" value="ECO:0000314"/>
    <property type="project" value="UniProtKB"/>
</dbReference>
<dbReference type="GO" id="GO:0005739">
    <property type="term" value="C:mitochondrion"/>
    <property type="evidence" value="ECO:0000314"/>
    <property type="project" value="UniProtKB"/>
</dbReference>
<dbReference type="GO" id="GO:0003735">
    <property type="term" value="F:structural constituent of ribosome"/>
    <property type="evidence" value="ECO:0007669"/>
    <property type="project" value="InterPro"/>
</dbReference>
<dbReference type="GO" id="GO:0032543">
    <property type="term" value="P:mitochondrial translation"/>
    <property type="evidence" value="ECO:0000303"/>
    <property type="project" value="ComplexPortal"/>
</dbReference>
<dbReference type="FunFam" id="2.20.28.120:FF:000005">
    <property type="entry name" value="39S ribosomal protein L33, mitochondrial"/>
    <property type="match status" value="1"/>
</dbReference>
<dbReference type="Gene3D" id="2.20.28.120">
    <property type="entry name" value="Ribosomal protein L33"/>
    <property type="match status" value="1"/>
</dbReference>
<dbReference type="InterPro" id="IPR052008">
    <property type="entry name" value="Mitoribosomal_protein_bL33"/>
</dbReference>
<dbReference type="InterPro" id="IPR001705">
    <property type="entry name" value="Ribosomal_bL33"/>
</dbReference>
<dbReference type="InterPro" id="IPR038584">
    <property type="entry name" value="Ribosomal_bL33_sf"/>
</dbReference>
<dbReference type="InterPro" id="IPR011332">
    <property type="entry name" value="Ribosomal_zn-bd"/>
</dbReference>
<dbReference type="NCBIfam" id="TIGR01023">
    <property type="entry name" value="rpmG_bact"/>
    <property type="match status" value="1"/>
</dbReference>
<dbReference type="PANTHER" id="PTHR47037">
    <property type="entry name" value="39S RIBOSOMAL PROTEIN L33, MITOCHONDRIAL"/>
    <property type="match status" value="1"/>
</dbReference>
<dbReference type="PANTHER" id="PTHR47037:SF1">
    <property type="entry name" value="LARGE RIBOSOMAL SUBUNIT PROTEIN BL33M"/>
    <property type="match status" value="1"/>
</dbReference>
<dbReference type="Pfam" id="PF00471">
    <property type="entry name" value="Ribosomal_L33"/>
    <property type="match status" value="1"/>
</dbReference>
<dbReference type="SUPFAM" id="SSF57829">
    <property type="entry name" value="Zn-binding ribosomal proteins"/>
    <property type="match status" value="1"/>
</dbReference>
<keyword id="KW-0002">3D-structure</keyword>
<keyword id="KW-0025">Alternative splicing</keyword>
<keyword id="KW-0496">Mitochondrion</keyword>
<keyword id="KW-1267">Proteomics identification</keyword>
<keyword id="KW-1185">Reference proteome</keyword>
<keyword id="KW-0687">Ribonucleoprotein</keyword>
<keyword id="KW-0689">Ribosomal protein</keyword>
<keyword id="KW-0809">Transit peptide</keyword>
<name>RM33_HUMAN</name>
<proteinExistence type="evidence at protein level"/>
<feature type="transit peptide" description="Mitochondrion" evidence="1">
    <location>
        <begin position="1"/>
        <end position="8"/>
    </location>
</feature>
<feature type="chain" id="PRO_0000238625" description="Large ribosomal subunit protein bL33m">
    <location>
        <begin position="9"/>
        <end position="65"/>
    </location>
</feature>
<feature type="splice variant" id="VSP_042822" description="In isoform 2." evidence="6">
    <original>KNILVRMVSEAGTGFCFNTKRNRLREKLTLLHYDPVVKQRVLFVEKKKIRSL</original>
    <variation>NETKSPLRGKEKNTLPLNGGLKMTLIYKEKTEGGDTDSEIL</variation>
    <location>
        <begin position="14"/>
        <end position="65"/>
    </location>
</feature>
<feature type="strand" evidence="15">
    <location>
        <begin position="15"/>
        <end position="22"/>
    </location>
</feature>
<feature type="strand" evidence="16">
    <location>
        <begin position="23"/>
        <end position="25"/>
    </location>
</feature>
<feature type="strand" evidence="15">
    <location>
        <begin position="29"/>
        <end position="38"/>
    </location>
</feature>
<feature type="strand" evidence="15">
    <location>
        <begin position="42"/>
        <end position="47"/>
    </location>
</feature>
<feature type="turn" evidence="15">
    <location>
        <begin position="48"/>
        <end position="51"/>
    </location>
</feature>
<feature type="strand" evidence="15">
    <location>
        <begin position="52"/>
        <end position="61"/>
    </location>
</feature>